<name>RPOC2_NYMAL</name>
<gene>
    <name evidence="1" type="primary">rpoC2</name>
</gene>
<proteinExistence type="inferred from homology"/>
<sequence length="1401" mass="157965">MEVLMAERADLVFHNKVIDGTAMKRLISRLIDHFGIAYTSHILDQVKTLGFQQATATSISLGIDDLLTTPSKRWLVQDAEQQSLILEKHHHYGNVHAVEKLRQSIEIWYATSEYLRQEMNLNFKMTDPSNPVHIMSYSGARGNASQVHQLVGMRGLMSDPQGQMIDLPIQSNLREGLSLTEYTISCYGARKGVVDTAVRTSDAGYLTRRLVEVVQHIVVRRTDCGSTRGISVSFRKGMTERIFIQTLIGRVLANDVYLGLRCIATRNQDIGIGLVNRFMTSRAQPIYIRTPFTCRSASWICRLCYGRSPTHGDLVELGEAVGIIAGQSIGEPGTQLTLRTFHTGGVFTGGTAEHVRAPSNGKIKFNEDLVHPTRTRHGHPAFLCYVDLYVTIESQDIIHSVNIPPKSFLLVQNDQYVESEQVIAEIRAGTSTFHFKERVRKHIYSDSEGEMHWSTGVYHAPEYTHGNVHFLPKTSHLWILSGGPCKSSLVPFSLHKDQDQMNVQSLSVQERSISDFSVNNNRVKHKLFGSDPLARKGRRISDYAAGSERVISNGDGDFIYPAILRENSYLLAKRRRNRFIIPFQYDPEWEKELTPHSSTSITVEIPANGILRRNSILAYFDDPRYRRSSSGITKYGIIEVDSIVKKEGLVEYRRPKESRPKYQMKVDRFFVIPEEVHILPGSSSIMVRNNSIIGVDTRITFNTRSQIGGLVRIEKKKKIELKIFSGGIHFPGETDKISRHIGILIPPGARKKMDKGSKGKNWEGNNWVYVQRITPIKKKYFVSVRPVVTYEIADGINLVTLFPGDMLQEKDNLRLQVVNYILYGDGKPIRGISHTSIQLVRTCLVLNWDQDKKGSIEKVQASSAEVRANDLIRYFIRIDLVKSPILYTGKRNDRSGSVIPDTGSYCANTNLFSSKVKIKSLSQHQGTVRTFLNRNKEGQSLIVFSSSNCSRINVSKYHNVTKESIKEKEDTPIPILNLLGPLGTVPKIHNFSPSYHSITHNEILLNKYLILDNKNPKQTFQLLKYYLVDENGRISNANPCSDIIFNLFGSCFLPHDYCEGTSTTRIISLGQFICENVCLSKHGTRIKSGQVIMVYLDSFIIRSAKPYLATRGATVHGDYGEIFYEGDTLVTFIYEKSRSGDITHGLPKVEQVLEVRSIDSISMNLEKRVEGWNEHITGILGIPWGFLIGAELTIAQSRVSLVNKIQKVYRSQGVQIHNKHIEIIVRQITSKVLVSEDGMSNVFSPGELIGLLRAERAGRALEEAICYRAVLLGITRASLNTQSFISEASFQETARVLAKAALRGRIDWLKGLKENVVLGGMIPVGTGFKRFVHRSREYNNIPLEIQKKNFFGGEMRDILFHHRELFCSCIPKPKSFHNTSEQPFYAMGSNPIVHKSGFIIS</sequence>
<reference key="1">
    <citation type="journal article" date="2004" name="Mol. Biol. Evol.">
        <title>The chloroplast genome of Nymphaea alba: whole-genome analyses and the problem of identifying the most basal angiosperm.</title>
        <authorList>
            <person name="Goremykin V.V."/>
            <person name="Hirsch-Ernst K.I."/>
            <person name="Woelfl S."/>
            <person name="Hellwig F.H."/>
        </authorList>
    </citation>
    <scope>NUCLEOTIDE SEQUENCE [LARGE SCALE GENOMIC DNA]</scope>
</reference>
<comment type="function">
    <text evidence="1">DNA-dependent RNA polymerase catalyzes the transcription of DNA into RNA using the four ribonucleoside triphosphates as substrates.</text>
</comment>
<comment type="catalytic activity">
    <reaction evidence="1">
        <text>RNA(n) + a ribonucleoside 5'-triphosphate = RNA(n+1) + diphosphate</text>
        <dbReference type="Rhea" id="RHEA:21248"/>
        <dbReference type="Rhea" id="RHEA-COMP:14527"/>
        <dbReference type="Rhea" id="RHEA-COMP:17342"/>
        <dbReference type="ChEBI" id="CHEBI:33019"/>
        <dbReference type="ChEBI" id="CHEBI:61557"/>
        <dbReference type="ChEBI" id="CHEBI:140395"/>
        <dbReference type="EC" id="2.7.7.6"/>
    </reaction>
</comment>
<comment type="cofactor">
    <cofactor evidence="1">
        <name>Zn(2+)</name>
        <dbReference type="ChEBI" id="CHEBI:29105"/>
    </cofactor>
    <text evidence="1">Binds 1 Zn(2+) ion per subunit.</text>
</comment>
<comment type="subunit">
    <text evidence="1">In plastids the minimal PEP RNA polymerase catalytic core is composed of four subunits: alpha, beta, beta', and beta''. When a (nuclear-encoded) sigma factor is associated with the core the holoenzyme is formed, which can initiate transcription.</text>
</comment>
<comment type="subcellular location">
    <subcellularLocation>
        <location evidence="1">Plastid</location>
        <location evidence="1">Chloroplast</location>
    </subcellularLocation>
</comment>
<comment type="similarity">
    <text evidence="1">Belongs to the RNA polymerase beta' chain family. RpoC2 subfamily.</text>
</comment>
<accession>Q6EW58</accession>
<geneLocation type="chloroplast"/>
<keyword id="KW-0150">Chloroplast</keyword>
<keyword id="KW-0240">DNA-directed RNA polymerase</keyword>
<keyword id="KW-0479">Metal-binding</keyword>
<keyword id="KW-0548">Nucleotidyltransferase</keyword>
<keyword id="KW-0934">Plastid</keyword>
<keyword id="KW-0804">Transcription</keyword>
<keyword id="KW-0808">Transferase</keyword>
<keyword id="KW-0862">Zinc</keyword>
<protein>
    <recommendedName>
        <fullName evidence="1">DNA-directed RNA polymerase subunit beta''</fullName>
        <ecNumber evidence="1">2.7.7.6</ecNumber>
    </recommendedName>
    <alternativeName>
        <fullName evidence="1">PEP</fullName>
    </alternativeName>
    <alternativeName>
        <fullName evidence="1">Plastid-encoded RNA polymerase subunit beta''</fullName>
        <shortName evidence="1">RNA polymerase subunit beta''</shortName>
    </alternativeName>
</protein>
<organism>
    <name type="scientific">Nymphaea alba</name>
    <name type="common">White water-lily</name>
    <name type="synonym">Castalia alba</name>
    <dbReference type="NCBI Taxonomy" id="34301"/>
    <lineage>
        <taxon>Eukaryota</taxon>
        <taxon>Viridiplantae</taxon>
        <taxon>Streptophyta</taxon>
        <taxon>Embryophyta</taxon>
        <taxon>Tracheophyta</taxon>
        <taxon>Spermatophyta</taxon>
        <taxon>Magnoliopsida</taxon>
        <taxon>Nymphaeales</taxon>
        <taxon>Nymphaeaceae</taxon>
        <taxon>Nymphaea</taxon>
    </lineage>
</organism>
<dbReference type="EC" id="2.7.7.6" evidence="1"/>
<dbReference type="EMBL" id="AJ627251">
    <property type="protein sequence ID" value="CAF28583.1"/>
    <property type="molecule type" value="Genomic_DNA"/>
</dbReference>
<dbReference type="RefSeq" id="YP_053145.2">
    <property type="nucleotide sequence ID" value="NC_006050.1"/>
</dbReference>
<dbReference type="SMR" id="Q6EW58"/>
<dbReference type="GeneID" id="2896157"/>
<dbReference type="GO" id="GO:0009507">
    <property type="term" value="C:chloroplast"/>
    <property type="evidence" value="ECO:0007669"/>
    <property type="project" value="UniProtKB-SubCell"/>
</dbReference>
<dbReference type="GO" id="GO:0000428">
    <property type="term" value="C:DNA-directed RNA polymerase complex"/>
    <property type="evidence" value="ECO:0007669"/>
    <property type="project" value="UniProtKB-KW"/>
</dbReference>
<dbReference type="GO" id="GO:0005739">
    <property type="term" value="C:mitochondrion"/>
    <property type="evidence" value="ECO:0007669"/>
    <property type="project" value="GOC"/>
</dbReference>
<dbReference type="GO" id="GO:0003677">
    <property type="term" value="F:DNA binding"/>
    <property type="evidence" value="ECO:0007669"/>
    <property type="project" value="UniProtKB-UniRule"/>
</dbReference>
<dbReference type="GO" id="GO:0003899">
    <property type="term" value="F:DNA-directed RNA polymerase activity"/>
    <property type="evidence" value="ECO:0007669"/>
    <property type="project" value="UniProtKB-UniRule"/>
</dbReference>
<dbReference type="GO" id="GO:0008270">
    <property type="term" value="F:zinc ion binding"/>
    <property type="evidence" value="ECO:0007669"/>
    <property type="project" value="UniProtKB-UniRule"/>
</dbReference>
<dbReference type="GO" id="GO:0006351">
    <property type="term" value="P:DNA-templated transcription"/>
    <property type="evidence" value="ECO:0007669"/>
    <property type="project" value="UniProtKB-UniRule"/>
</dbReference>
<dbReference type="CDD" id="cd02655">
    <property type="entry name" value="RNAP_beta'_C"/>
    <property type="match status" value="1"/>
</dbReference>
<dbReference type="FunFam" id="1.10.132.30:FF:000002">
    <property type="entry name" value="DNA-directed RNA polymerase subunit beta"/>
    <property type="match status" value="1"/>
</dbReference>
<dbReference type="Gene3D" id="1.10.132.30">
    <property type="match status" value="1"/>
</dbReference>
<dbReference type="Gene3D" id="1.10.150.390">
    <property type="match status" value="1"/>
</dbReference>
<dbReference type="Gene3D" id="1.10.1790.20">
    <property type="match status" value="1"/>
</dbReference>
<dbReference type="Gene3D" id="1.10.274.100">
    <property type="entry name" value="RNA polymerase Rpb1, domain 3"/>
    <property type="match status" value="1"/>
</dbReference>
<dbReference type="HAMAP" id="MF_01324">
    <property type="entry name" value="RNApol_bact_RpoC2"/>
    <property type="match status" value="1"/>
</dbReference>
<dbReference type="InterPro" id="IPR012756">
    <property type="entry name" value="DNA-dir_RpoC2_beta_pp"/>
</dbReference>
<dbReference type="InterPro" id="IPR050254">
    <property type="entry name" value="RNA_pol_beta''_euk"/>
</dbReference>
<dbReference type="InterPro" id="IPR042102">
    <property type="entry name" value="RNA_pol_Rpb1_3_sf"/>
</dbReference>
<dbReference type="InterPro" id="IPR007083">
    <property type="entry name" value="RNA_pol_Rpb1_4"/>
</dbReference>
<dbReference type="InterPro" id="IPR007081">
    <property type="entry name" value="RNA_pol_Rpb1_5"/>
</dbReference>
<dbReference type="InterPro" id="IPR038120">
    <property type="entry name" value="Rpb1_funnel_sf"/>
</dbReference>
<dbReference type="NCBIfam" id="TIGR02388">
    <property type="entry name" value="rpoC2_cyan"/>
    <property type="match status" value="1"/>
</dbReference>
<dbReference type="PANTHER" id="PTHR34995">
    <property type="entry name" value="DNA-DIRECTED RNA POLYMERASE SUBUNIT BETA"/>
    <property type="match status" value="1"/>
</dbReference>
<dbReference type="PANTHER" id="PTHR34995:SF1">
    <property type="entry name" value="DNA-DIRECTED RNA POLYMERASE SUBUNIT BETA"/>
    <property type="match status" value="1"/>
</dbReference>
<dbReference type="Pfam" id="PF05000">
    <property type="entry name" value="RNA_pol_Rpb1_4"/>
    <property type="match status" value="1"/>
</dbReference>
<dbReference type="Pfam" id="PF04998">
    <property type="entry name" value="RNA_pol_Rpb1_5"/>
    <property type="match status" value="2"/>
</dbReference>
<dbReference type="SUPFAM" id="SSF64484">
    <property type="entry name" value="beta and beta-prime subunits of DNA dependent RNA-polymerase"/>
    <property type="match status" value="1"/>
</dbReference>
<feature type="chain" id="PRO_0000067933" description="DNA-directed RNA polymerase subunit beta''">
    <location>
        <begin position="1"/>
        <end position="1401"/>
    </location>
</feature>
<feature type="binding site" evidence="1">
    <location>
        <position position="224"/>
    </location>
    <ligand>
        <name>Zn(2+)</name>
        <dbReference type="ChEBI" id="CHEBI:29105"/>
    </ligand>
</feature>
<feature type="binding site" evidence="1">
    <location>
        <position position="294"/>
    </location>
    <ligand>
        <name>Zn(2+)</name>
        <dbReference type="ChEBI" id="CHEBI:29105"/>
    </ligand>
</feature>
<feature type="binding site" evidence="1">
    <location>
        <position position="301"/>
    </location>
    <ligand>
        <name>Zn(2+)</name>
        <dbReference type="ChEBI" id="CHEBI:29105"/>
    </ligand>
</feature>
<feature type="binding site" evidence="1">
    <location>
        <position position="304"/>
    </location>
    <ligand>
        <name>Zn(2+)</name>
        <dbReference type="ChEBI" id="CHEBI:29105"/>
    </ligand>
</feature>
<evidence type="ECO:0000255" key="1">
    <source>
        <dbReference type="HAMAP-Rule" id="MF_01324"/>
    </source>
</evidence>